<keyword id="KW-0010">Activator</keyword>
<keyword id="KW-0472">Membrane</keyword>
<keyword id="KW-0496">Mitochondrion</keyword>
<keyword id="KW-0999">Mitochondrion inner membrane</keyword>
<keyword id="KW-0507">mRNA processing</keyword>
<keyword id="KW-0694">RNA-binding</keyword>
<keyword id="KW-0810">Translation regulation</keyword>
<organism>
    <name type="scientific">Saccharomyces bayanus</name>
    <name type="common">Yeast</name>
    <name type="synonym">Saccharomyces uvarum x Saccharomyces eubayanus</name>
    <dbReference type="NCBI Taxonomy" id="4931"/>
    <lineage>
        <taxon>Eukaryota</taxon>
        <taxon>Fungi</taxon>
        <taxon>Dikarya</taxon>
        <taxon>Ascomycota</taxon>
        <taxon>Saccharomycotina</taxon>
        <taxon>Saccharomycetes</taxon>
        <taxon>Saccharomycetales</taxon>
        <taxon>Saccharomycetaceae</taxon>
        <taxon>Saccharomyces</taxon>
    </lineage>
</organism>
<protein>
    <recommendedName>
        <fullName>Protein PET54</fullName>
    </recommendedName>
    <alternativeName>
        <fullName>Petite colonies protein 54</fullName>
    </alternativeName>
</protein>
<name>PET54_SACBA</name>
<sequence length="294" mass="34770">MKGSSKAIKRVLEHLQSTGRVLGTVESKVPAGISEEAALSGGHQQLQIKKPLILQFRSYNPYLVKEDIVSILPENQYKKRGQFTNGLDFQLIKVRDPKYFQFKDQYYLLFNDHNSLVEYADLTRLSRINKVRVRMTPLMQPLPNLMTKFQRYSQNLHNAFQSSEKYFEGLTEKIDAKNMIDVTQLWRVLDSVREMESKSVLVWNFPTELQSSNILNYFWFYNIRSSFKMYWDDEMKRNLRFISFENSNDAYRFKRNYHGLLAKELLNPPRKEKDTLETNSVIDDSKLLIEHLNE</sequence>
<feature type="chain" id="PRO_0000058318" description="Protein PET54">
    <location>
        <begin position="1"/>
        <end position="294"/>
    </location>
</feature>
<accession>O13364</accession>
<dbReference type="EMBL" id="AF023874">
    <property type="protein sequence ID" value="AAB81269.1"/>
    <property type="molecule type" value="Genomic_DNA"/>
</dbReference>
<dbReference type="GO" id="GO:0005743">
    <property type="term" value="C:mitochondrial inner membrane"/>
    <property type="evidence" value="ECO:0007669"/>
    <property type="project" value="UniProtKB-SubCell"/>
</dbReference>
<dbReference type="GO" id="GO:0003723">
    <property type="term" value="F:RNA binding"/>
    <property type="evidence" value="ECO:0007669"/>
    <property type="project" value="UniProtKB-KW"/>
</dbReference>
<dbReference type="GO" id="GO:0006397">
    <property type="term" value="P:mRNA processing"/>
    <property type="evidence" value="ECO:0007669"/>
    <property type="project" value="UniProtKB-KW"/>
</dbReference>
<dbReference type="GO" id="GO:0006417">
    <property type="term" value="P:regulation of translation"/>
    <property type="evidence" value="ECO:0007669"/>
    <property type="project" value="UniProtKB-KW"/>
</dbReference>
<dbReference type="InterPro" id="IPR035979">
    <property type="entry name" value="RBD_domain_sf"/>
</dbReference>
<dbReference type="InterPro" id="IPR003954">
    <property type="entry name" value="RRM_dom_euk"/>
</dbReference>
<dbReference type="SMART" id="SM00361">
    <property type="entry name" value="RRM_1"/>
    <property type="match status" value="1"/>
</dbReference>
<dbReference type="SUPFAM" id="SSF54928">
    <property type="entry name" value="RNA-binding domain, RBD"/>
    <property type="match status" value="1"/>
</dbReference>
<gene>
    <name type="primary">PET54</name>
</gene>
<reference key="1">
    <citation type="journal article" date="2000" name="Genetics">
        <title>Highly diverged homologs of Saccharomyces cerevisiae mitochondrial mRNA-specific translational activators have orthologous functions in other budding yeasts.</title>
        <authorList>
            <person name="Costanzo M.C."/>
            <person name="Bonnefoy N."/>
            <person name="Williams E.H."/>
            <person name="Clark-Walker G.D."/>
            <person name="Fox T.D."/>
        </authorList>
    </citation>
    <scope>NUCLEOTIDE SEQUENCE [GENOMIC DNA]</scope>
    <source>
        <strain>ATCC 76513 / CBS 380 / DSM 70412 / JCM 7258 / NBRC 1127 / NRRL Y-12624</strain>
    </source>
</reference>
<comment type="function">
    <text evidence="1">Activator of specific mitochondrial mRNAs. PET54 is involved in the excision of intron aI5-beta from pre-mRNA for cytochrome c oxidase I (COX1) and plays a role in promoting the translation of COX3 (By similarity).</text>
</comment>
<comment type="subcellular location">
    <subcellularLocation>
        <location evidence="1">Mitochondrion inner membrane</location>
        <topology evidence="1">Peripheral membrane protein</topology>
    </subcellularLocation>
</comment>
<evidence type="ECO:0000250" key="1"/>
<proteinExistence type="inferred from homology"/>